<proteinExistence type="inferred from homology"/>
<accession>Q9X4H4</accession>
<feature type="chain" id="PRO_0000109221" description="UDP-N-acetylglucosamine--N-acetylmuramyl-(pentapeptide) pyrophosphoryl-undecaprenol N-acetylglucosamine transferase">
    <location>
        <begin position="1"/>
        <end position="362"/>
    </location>
</feature>
<feature type="binding site" evidence="1">
    <location>
        <begin position="10"/>
        <end position="12"/>
    </location>
    <ligand>
        <name>UDP-N-acetyl-alpha-D-glucosamine</name>
        <dbReference type="ChEBI" id="CHEBI:57705"/>
    </ligand>
</feature>
<feature type="binding site" evidence="1">
    <location>
        <position position="124"/>
    </location>
    <ligand>
        <name>UDP-N-acetyl-alpha-D-glucosamine</name>
        <dbReference type="ChEBI" id="CHEBI:57705"/>
    </ligand>
</feature>
<feature type="binding site" evidence="1">
    <location>
        <position position="161"/>
    </location>
    <ligand>
        <name>UDP-N-acetyl-alpha-D-glucosamine</name>
        <dbReference type="ChEBI" id="CHEBI:57705"/>
    </ligand>
</feature>
<feature type="binding site" evidence="1">
    <location>
        <position position="195"/>
    </location>
    <ligand>
        <name>UDP-N-acetyl-alpha-D-glucosamine</name>
        <dbReference type="ChEBI" id="CHEBI:57705"/>
    </ligand>
</feature>
<feature type="binding site" evidence="1">
    <location>
        <position position="291"/>
    </location>
    <ligand>
        <name>UDP-N-acetyl-alpha-D-glucosamine</name>
        <dbReference type="ChEBI" id="CHEBI:57705"/>
    </ligand>
</feature>
<sequence>MHVVLAGGGTAGHIEPALALADALRRQDPTVGITALGTERGLETRLVPERGYELALIPAVPLPRKPTPELITVPGRLRGTIKAAEQILERTKADCVVGFGGYVALPGYLAAKRLGVPIVIHEANARPGLANKIGSRYAARVARLHAGQQRARRPLHRHPVRRSIATLDRAAVRPEARARFGLDPNLPTLLVSGGSQGARRLNEVVQQVAPWLQQAGIQILHAVGPKNELPQVQQMPGMPPYIPVSYLDRMDLAYAAADMMLCRAGAMTVAELSAVGLPAAYVPLPIGNGEQRLNAQPVVKAGGGLLVDDAELTPEWVQQTVLPVLADPHRLYEMSRAAGEFGRRDADELLVGMVYEAIASRR</sequence>
<gene>
    <name evidence="1" type="primary">murG</name>
</gene>
<evidence type="ECO:0000255" key="1">
    <source>
        <dbReference type="HAMAP-Rule" id="MF_00033"/>
    </source>
</evidence>
<dbReference type="EC" id="2.4.1.227" evidence="1"/>
<dbReference type="EMBL" id="AF110367">
    <property type="protein sequence ID" value="AAD26629.1"/>
    <property type="molecule type" value="Genomic_DNA"/>
</dbReference>
<dbReference type="SMR" id="Q9X4H4"/>
<dbReference type="CAZy" id="GT28">
    <property type="family name" value="Glycosyltransferase Family 28"/>
</dbReference>
<dbReference type="UniPathway" id="UPA00219"/>
<dbReference type="GO" id="GO:0005886">
    <property type="term" value="C:plasma membrane"/>
    <property type="evidence" value="ECO:0007669"/>
    <property type="project" value="UniProtKB-SubCell"/>
</dbReference>
<dbReference type="GO" id="GO:0051991">
    <property type="term" value="F:UDP-N-acetyl-D-glucosamine:N-acetylmuramoyl-L-alanyl-D-glutamyl-meso-2,6-diaminopimelyl-D-alanyl-D-alanine-diphosphoundecaprenol 4-beta-N-acetylglucosaminlytransferase activity"/>
    <property type="evidence" value="ECO:0007669"/>
    <property type="project" value="RHEA"/>
</dbReference>
<dbReference type="GO" id="GO:0050511">
    <property type="term" value="F:undecaprenyldiphospho-muramoylpentapeptide beta-N-acetylglucosaminyltransferase activity"/>
    <property type="evidence" value="ECO:0007669"/>
    <property type="project" value="UniProtKB-UniRule"/>
</dbReference>
<dbReference type="GO" id="GO:0005975">
    <property type="term" value="P:carbohydrate metabolic process"/>
    <property type="evidence" value="ECO:0007669"/>
    <property type="project" value="InterPro"/>
</dbReference>
<dbReference type="GO" id="GO:0051301">
    <property type="term" value="P:cell division"/>
    <property type="evidence" value="ECO:0007669"/>
    <property type="project" value="UniProtKB-KW"/>
</dbReference>
<dbReference type="GO" id="GO:0071555">
    <property type="term" value="P:cell wall organization"/>
    <property type="evidence" value="ECO:0007669"/>
    <property type="project" value="UniProtKB-KW"/>
</dbReference>
<dbReference type="GO" id="GO:0030259">
    <property type="term" value="P:lipid glycosylation"/>
    <property type="evidence" value="ECO:0007669"/>
    <property type="project" value="UniProtKB-UniRule"/>
</dbReference>
<dbReference type="GO" id="GO:0009252">
    <property type="term" value="P:peptidoglycan biosynthetic process"/>
    <property type="evidence" value="ECO:0007669"/>
    <property type="project" value="UniProtKB-UniRule"/>
</dbReference>
<dbReference type="GO" id="GO:0008360">
    <property type="term" value="P:regulation of cell shape"/>
    <property type="evidence" value="ECO:0007669"/>
    <property type="project" value="UniProtKB-KW"/>
</dbReference>
<dbReference type="CDD" id="cd03785">
    <property type="entry name" value="GT28_MurG"/>
    <property type="match status" value="1"/>
</dbReference>
<dbReference type="Gene3D" id="3.40.50.2000">
    <property type="entry name" value="Glycogen Phosphorylase B"/>
    <property type="match status" value="2"/>
</dbReference>
<dbReference type="HAMAP" id="MF_00033">
    <property type="entry name" value="MurG"/>
    <property type="match status" value="1"/>
</dbReference>
<dbReference type="InterPro" id="IPR006009">
    <property type="entry name" value="GlcNAc_MurG"/>
</dbReference>
<dbReference type="InterPro" id="IPR007235">
    <property type="entry name" value="Glyco_trans_28_C"/>
</dbReference>
<dbReference type="InterPro" id="IPR004276">
    <property type="entry name" value="GlycoTrans_28_N"/>
</dbReference>
<dbReference type="NCBIfam" id="TIGR01133">
    <property type="entry name" value="murG"/>
    <property type="match status" value="1"/>
</dbReference>
<dbReference type="PANTHER" id="PTHR21015:SF22">
    <property type="entry name" value="GLYCOSYLTRANSFERASE"/>
    <property type="match status" value="1"/>
</dbReference>
<dbReference type="PANTHER" id="PTHR21015">
    <property type="entry name" value="UDP-N-ACETYLGLUCOSAMINE--N-ACETYLMURAMYL-(PENTAPEPTIDE) PYROPHOSPHORYL-UNDECAPRENOL N-ACETYLGLUCOSAMINE TRANSFERASE 1"/>
    <property type="match status" value="1"/>
</dbReference>
<dbReference type="Pfam" id="PF04101">
    <property type="entry name" value="Glyco_tran_28_C"/>
    <property type="match status" value="1"/>
</dbReference>
<dbReference type="Pfam" id="PF03033">
    <property type="entry name" value="Glyco_transf_28"/>
    <property type="match status" value="1"/>
</dbReference>
<dbReference type="SUPFAM" id="SSF53756">
    <property type="entry name" value="UDP-Glycosyltransferase/glycogen phosphorylase"/>
    <property type="match status" value="1"/>
</dbReference>
<comment type="function">
    <text evidence="1">Cell wall formation. Catalyzes the transfer of a GlcNAc subunit on undecaprenyl-pyrophosphoryl-MurNAc-pentapeptide (lipid intermediate I) to form undecaprenyl-pyrophosphoryl-MurNAc-(pentapeptide)GlcNAc (lipid intermediate II).</text>
</comment>
<comment type="catalytic activity">
    <reaction evidence="1">
        <text>di-trans,octa-cis-undecaprenyl diphospho-N-acetyl-alpha-D-muramoyl-L-alanyl-D-glutamyl-meso-2,6-diaminopimeloyl-D-alanyl-D-alanine + UDP-N-acetyl-alpha-D-glucosamine = di-trans,octa-cis-undecaprenyl diphospho-[N-acetyl-alpha-D-glucosaminyl-(1-&gt;4)]-N-acetyl-alpha-D-muramoyl-L-alanyl-D-glutamyl-meso-2,6-diaminopimeloyl-D-alanyl-D-alanine + UDP + H(+)</text>
        <dbReference type="Rhea" id="RHEA:31227"/>
        <dbReference type="ChEBI" id="CHEBI:15378"/>
        <dbReference type="ChEBI" id="CHEBI:57705"/>
        <dbReference type="ChEBI" id="CHEBI:58223"/>
        <dbReference type="ChEBI" id="CHEBI:61387"/>
        <dbReference type="ChEBI" id="CHEBI:61388"/>
        <dbReference type="EC" id="2.4.1.227"/>
    </reaction>
</comment>
<comment type="pathway">
    <text evidence="1">Cell wall biogenesis; peptidoglycan biosynthesis.</text>
</comment>
<comment type="subcellular location">
    <subcellularLocation>
        <location evidence="1">Cell membrane</location>
        <topology evidence="1">Peripheral membrane protein</topology>
        <orientation evidence="1">Cytoplasmic side</orientation>
    </subcellularLocation>
</comment>
<comment type="similarity">
    <text evidence="1">Belongs to the glycosyltransferase 28 family. MurG subfamily.</text>
</comment>
<reference key="1">
    <citation type="submission" date="1998-11" db="EMBL/GenBank/DDBJ databases">
        <title>Characterization of dcw cluster from Streptomycetes.</title>
        <authorList>
            <person name="Mikulik K."/>
            <person name="Zhulanova E."/>
        </authorList>
    </citation>
    <scope>NUCLEOTIDE SEQUENCE [GENOMIC DNA]</scope>
    <source>
        <strain>DSM 40733 / Tue 365</strain>
    </source>
</reference>
<name>MURG_STRCU</name>
<protein>
    <recommendedName>
        <fullName evidence="1">UDP-N-acetylglucosamine--N-acetylmuramyl-(pentapeptide) pyrophosphoryl-undecaprenol N-acetylglucosamine transferase</fullName>
        <ecNumber evidence="1">2.4.1.227</ecNumber>
    </recommendedName>
    <alternativeName>
        <fullName evidence="1">Undecaprenyl-PP-MurNAc-pentapeptide-UDPGlcNAc GlcNAc transferase</fullName>
    </alternativeName>
</protein>
<organism>
    <name type="scientific">Streptomyces collinus</name>
    <dbReference type="NCBI Taxonomy" id="42684"/>
    <lineage>
        <taxon>Bacteria</taxon>
        <taxon>Bacillati</taxon>
        <taxon>Actinomycetota</taxon>
        <taxon>Actinomycetes</taxon>
        <taxon>Kitasatosporales</taxon>
        <taxon>Streptomycetaceae</taxon>
        <taxon>Streptomyces</taxon>
    </lineage>
</organism>
<keyword id="KW-0131">Cell cycle</keyword>
<keyword id="KW-0132">Cell division</keyword>
<keyword id="KW-1003">Cell membrane</keyword>
<keyword id="KW-0133">Cell shape</keyword>
<keyword id="KW-0961">Cell wall biogenesis/degradation</keyword>
<keyword id="KW-0328">Glycosyltransferase</keyword>
<keyword id="KW-0472">Membrane</keyword>
<keyword id="KW-0573">Peptidoglycan synthesis</keyword>
<keyword id="KW-0808">Transferase</keyword>